<dbReference type="EC" id="2.3.1.12"/>
<dbReference type="EMBL" id="CP000087">
    <property type="protein sequence ID" value="ABE04381.1"/>
    <property type="molecule type" value="Genomic_DNA"/>
</dbReference>
<dbReference type="RefSeq" id="WP_011476992.1">
    <property type="nucleotide sequence ID" value="NC_007940.1"/>
</dbReference>
<dbReference type="SMR" id="Q1RJT3"/>
<dbReference type="KEGG" id="rbe:RBE_0300"/>
<dbReference type="eggNOG" id="COG0508">
    <property type="taxonomic scope" value="Bacteria"/>
</dbReference>
<dbReference type="HOGENOM" id="CLU_016733_10_2_5"/>
<dbReference type="OrthoDB" id="9805770at2"/>
<dbReference type="Proteomes" id="UP000001951">
    <property type="component" value="Chromosome"/>
</dbReference>
<dbReference type="GO" id="GO:0045254">
    <property type="term" value="C:pyruvate dehydrogenase complex"/>
    <property type="evidence" value="ECO:0007669"/>
    <property type="project" value="InterPro"/>
</dbReference>
<dbReference type="GO" id="GO:0004742">
    <property type="term" value="F:dihydrolipoyllysine-residue acetyltransferase activity"/>
    <property type="evidence" value="ECO:0007669"/>
    <property type="project" value="UniProtKB-EC"/>
</dbReference>
<dbReference type="GO" id="GO:0006086">
    <property type="term" value="P:pyruvate decarboxylation to acetyl-CoA"/>
    <property type="evidence" value="ECO:0007669"/>
    <property type="project" value="InterPro"/>
</dbReference>
<dbReference type="CDD" id="cd06849">
    <property type="entry name" value="lipoyl_domain"/>
    <property type="match status" value="1"/>
</dbReference>
<dbReference type="FunFam" id="2.40.50.100:FF:000010">
    <property type="entry name" value="Acetyltransferase component of pyruvate dehydrogenase complex"/>
    <property type="match status" value="1"/>
</dbReference>
<dbReference type="FunFam" id="3.30.559.10:FF:000003">
    <property type="entry name" value="Acetyltransferase component of pyruvate dehydrogenase complex"/>
    <property type="match status" value="1"/>
</dbReference>
<dbReference type="Gene3D" id="2.40.50.100">
    <property type="match status" value="1"/>
</dbReference>
<dbReference type="Gene3D" id="3.30.559.10">
    <property type="entry name" value="Chloramphenicol acetyltransferase-like domain"/>
    <property type="match status" value="1"/>
</dbReference>
<dbReference type="Gene3D" id="4.10.320.10">
    <property type="entry name" value="E3-binding domain"/>
    <property type="match status" value="1"/>
</dbReference>
<dbReference type="InterPro" id="IPR003016">
    <property type="entry name" value="2-oxoA_DH_lipoyl-BS"/>
</dbReference>
<dbReference type="InterPro" id="IPR001078">
    <property type="entry name" value="2-oxoacid_DH_actylTfrase"/>
</dbReference>
<dbReference type="InterPro" id="IPR000089">
    <property type="entry name" value="Biotin_lipoyl"/>
</dbReference>
<dbReference type="InterPro" id="IPR023213">
    <property type="entry name" value="CAT-like_dom_sf"/>
</dbReference>
<dbReference type="InterPro" id="IPR045257">
    <property type="entry name" value="E2/Pdx1"/>
</dbReference>
<dbReference type="InterPro" id="IPR036625">
    <property type="entry name" value="E3-bd_dom_sf"/>
</dbReference>
<dbReference type="InterPro" id="IPR006257">
    <property type="entry name" value="LAT1"/>
</dbReference>
<dbReference type="InterPro" id="IPR004167">
    <property type="entry name" value="PSBD"/>
</dbReference>
<dbReference type="InterPro" id="IPR011053">
    <property type="entry name" value="Single_hybrid_motif"/>
</dbReference>
<dbReference type="NCBIfam" id="TIGR01349">
    <property type="entry name" value="PDHac_trf_mito"/>
    <property type="match status" value="1"/>
</dbReference>
<dbReference type="PANTHER" id="PTHR23151">
    <property type="entry name" value="DIHYDROLIPOAMIDE ACETYL/SUCCINYL-TRANSFERASE-RELATED"/>
    <property type="match status" value="1"/>
</dbReference>
<dbReference type="PANTHER" id="PTHR23151:SF90">
    <property type="entry name" value="DIHYDROLIPOYLLYSINE-RESIDUE ACETYLTRANSFERASE COMPONENT OF PYRUVATE DEHYDROGENASE COMPLEX, MITOCHONDRIAL-RELATED"/>
    <property type="match status" value="1"/>
</dbReference>
<dbReference type="Pfam" id="PF00198">
    <property type="entry name" value="2-oxoacid_dh"/>
    <property type="match status" value="1"/>
</dbReference>
<dbReference type="Pfam" id="PF00364">
    <property type="entry name" value="Biotin_lipoyl"/>
    <property type="match status" value="1"/>
</dbReference>
<dbReference type="Pfam" id="PF02817">
    <property type="entry name" value="E3_binding"/>
    <property type="match status" value="1"/>
</dbReference>
<dbReference type="SUPFAM" id="SSF52777">
    <property type="entry name" value="CoA-dependent acyltransferases"/>
    <property type="match status" value="1"/>
</dbReference>
<dbReference type="SUPFAM" id="SSF47005">
    <property type="entry name" value="Peripheral subunit-binding domain of 2-oxo acid dehydrogenase complex"/>
    <property type="match status" value="1"/>
</dbReference>
<dbReference type="SUPFAM" id="SSF51230">
    <property type="entry name" value="Single hybrid motif"/>
    <property type="match status" value="1"/>
</dbReference>
<dbReference type="PROSITE" id="PS50968">
    <property type="entry name" value="BIOTINYL_LIPOYL"/>
    <property type="match status" value="1"/>
</dbReference>
<dbReference type="PROSITE" id="PS00189">
    <property type="entry name" value="LIPOYL"/>
    <property type="match status" value="1"/>
</dbReference>
<dbReference type="PROSITE" id="PS51826">
    <property type="entry name" value="PSBD"/>
    <property type="match status" value="1"/>
</dbReference>
<name>ODP2_RICBR</name>
<evidence type="ECO:0000250" key="1"/>
<evidence type="ECO:0000255" key="2"/>
<evidence type="ECO:0000255" key="3">
    <source>
        <dbReference type="PROSITE-ProRule" id="PRU01066"/>
    </source>
</evidence>
<evidence type="ECO:0000255" key="4">
    <source>
        <dbReference type="PROSITE-ProRule" id="PRU01170"/>
    </source>
</evidence>
<evidence type="ECO:0000305" key="5"/>
<reference key="1">
    <citation type="journal article" date="2006" name="PLoS Genet.">
        <title>Genome sequence of Rickettsia bellii illuminates the role of amoebae in gene exchanges between intracellular pathogens.</title>
        <authorList>
            <person name="Ogata H."/>
            <person name="La Scola B."/>
            <person name="Audic S."/>
            <person name="Renesto P."/>
            <person name="Blanc G."/>
            <person name="Robert C."/>
            <person name="Fournier P.-E."/>
            <person name="Claverie J.-M."/>
            <person name="Raoult D."/>
        </authorList>
    </citation>
    <scope>NUCLEOTIDE SEQUENCE [LARGE SCALE GENOMIC DNA]</scope>
    <source>
        <strain>RML369-C</strain>
    </source>
</reference>
<sequence>MPIKLLMPALSPTMTEGNLARWLKKEGDKINPGEVIAEIETDKATMEVEAVDEGTLAKIIIPQGSQNVPVNSLIAVLIEEGEELSGIEEFIAKNNSNSPKKEEISKPAETIAPQNVKEENITTASDQNNIKVFASPLAKRLAKIQNVRIEEIKGSGPHGRIIKQDVLSHKGGSKALSNKIVSRNPEEYRLAPNNNIRKIIAKRLLESKQTVPHFYLSIECNVDKLLDIREDINKSFGDDKSAKISVNDFIILAVAKALQEVPNANASWGDDAIRYYNNVDISVAVAIENGLVTPIIRNADQKNIVDLSSEMKGLIKKARENKLTPEEFQGGGFTISNLGMYGIKNFNAIINPPQSCIMGVGSSSKRAIVKNDQISIATIMDVTLSADHRVVDGAVGAEFLAAFKRFIESPALMLLYTR</sequence>
<keyword id="KW-0012">Acyltransferase</keyword>
<keyword id="KW-0450">Lipoyl</keyword>
<keyword id="KW-0808">Transferase</keyword>
<proteinExistence type="inferred from homology"/>
<organism>
    <name type="scientific">Rickettsia bellii (strain RML369-C)</name>
    <dbReference type="NCBI Taxonomy" id="336407"/>
    <lineage>
        <taxon>Bacteria</taxon>
        <taxon>Pseudomonadati</taxon>
        <taxon>Pseudomonadota</taxon>
        <taxon>Alphaproteobacteria</taxon>
        <taxon>Rickettsiales</taxon>
        <taxon>Rickettsiaceae</taxon>
        <taxon>Rickettsieae</taxon>
        <taxon>Rickettsia</taxon>
        <taxon>belli group</taxon>
    </lineage>
</organism>
<feature type="chain" id="PRO_0000288763" description="Dihydrolipoyllysine-residue acetyltransferase component of pyruvate dehydrogenase complex">
    <location>
        <begin position="1"/>
        <end position="418"/>
    </location>
</feature>
<feature type="domain" description="Lipoyl-binding" evidence="3">
    <location>
        <begin position="2"/>
        <end position="78"/>
    </location>
</feature>
<feature type="domain" description="Peripheral subunit-binding (PSBD)" evidence="4">
    <location>
        <begin position="133"/>
        <end position="170"/>
    </location>
</feature>
<feature type="active site" evidence="2">
    <location>
        <position position="388"/>
    </location>
</feature>
<feature type="modified residue" description="N6-lipoyllysine" evidence="1 3">
    <location>
        <position position="43"/>
    </location>
</feature>
<accession>Q1RJT3</accession>
<gene>
    <name type="primary">pdhC</name>
    <name type="ordered locus">RBE_0300</name>
</gene>
<protein>
    <recommendedName>
        <fullName>Dihydrolipoyllysine-residue acetyltransferase component of pyruvate dehydrogenase complex</fullName>
        <ecNumber>2.3.1.12</ecNumber>
    </recommendedName>
    <alternativeName>
        <fullName>Dihydrolipoamide acetyltransferase component of pyruvate dehydrogenase complex</fullName>
    </alternativeName>
    <alternativeName>
        <fullName>E2</fullName>
    </alternativeName>
</protein>
<comment type="function">
    <text evidence="1">The pyruvate dehydrogenase complex catalyzes the overall conversion of pyruvate to acetyl-CoA and CO(2). It contains multiple copies of three enzymatic components: pyruvate dehydrogenase (E1), dihydrolipoamide acetyltransferase (E2) and lipoamide dehydrogenase (E3) (By similarity).</text>
</comment>
<comment type="catalytic activity">
    <reaction>
        <text>N(6)-[(R)-dihydrolipoyl]-L-lysyl-[protein] + acetyl-CoA = N(6)-[(R)-S(8)-acetyldihydrolipoyl]-L-lysyl-[protein] + CoA</text>
        <dbReference type="Rhea" id="RHEA:17017"/>
        <dbReference type="Rhea" id="RHEA-COMP:10475"/>
        <dbReference type="Rhea" id="RHEA-COMP:10478"/>
        <dbReference type="ChEBI" id="CHEBI:57287"/>
        <dbReference type="ChEBI" id="CHEBI:57288"/>
        <dbReference type="ChEBI" id="CHEBI:83100"/>
        <dbReference type="ChEBI" id="CHEBI:83111"/>
        <dbReference type="EC" id="2.3.1.12"/>
    </reaction>
</comment>
<comment type="cofactor">
    <cofactor evidence="1">
        <name>(R)-lipoate</name>
        <dbReference type="ChEBI" id="CHEBI:83088"/>
    </cofactor>
    <text evidence="1">Binds 1 lipoyl cofactor covalently.</text>
</comment>
<comment type="subunit">
    <text evidence="1">Forms a 24-polypeptide structural core with octahedral symmetry.</text>
</comment>
<comment type="similarity">
    <text evidence="5">Belongs to the 2-oxoacid dehydrogenase family.</text>
</comment>